<comment type="function">
    <text evidence="1">Catalyzes carboxymethyl transfer from carboxy-S-adenosyl-L-methionine (Cx-SAM) to 5-hydroxyuridine (ho5U) to form 5-carboxymethoxyuridine (cmo5U) at position 34 in tRNAs.</text>
</comment>
<comment type="catalytic activity">
    <reaction evidence="1">
        <text>carboxy-S-adenosyl-L-methionine + 5-hydroxyuridine(34) in tRNA = 5-carboxymethoxyuridine(34) in tRNA + S-adenosyl-L-homocysteine + H(+)</text>
        <dbReference type="Rhea" id="RHEA:52848"/>
        <dbReference type="Rhea" id="RHEA-COMP:13381"/>
        <dbReference type="Rhea" id="RHEA-COMP:13383"/>
        <dbReference type="ChEBI" id="CHEBI:15378"/>
        <dbReference type="ChEBI" id="CHEBI:57856"/>
        <dbReference type="ChEBI" id="CHEBI:134278"/>
        <dbReference type="ChEBI" id="CHEBI:136877"/>
        <dbReference type="ChEBI" id="CHEBI:136879"/>
    </reaction>
</comment>
<comment type="subunit">
    <text evidence="1">Homotetramer.</text>
</comment>
<comment type="similarity">
    <text evidence="1">Belongs to the class I-like SAM-binding methyltransferase superfamily. CmoB family.</text>
</comment>
<feature type="chain" id="PRO_0000313981" description="tRNA U34 carboxymethyltransferase">
    <location>
        <begin position="1"/>
        <end position="301"/>
    </location>
</feature>
<feature type="binding site" evidence="1">
    <location>
        <position position="70"/>
    </location>
    <ligand>
        <name>carboxy-S-adenosyl-L-methionine</name>
        <dbReference type="ChEBI" id="CHEBI:134278"/>
    </ligand>
</feature>
<feature type="binding site" evidence="1">
    <location>
        <position position="84"/>
    </location>
    <ligand>
        <name>carboxy-S-adenosyl-L-methionine</name>
        <dbReference type="ChEBI" id="CHEBI:134278"/>
    </ligand>
</feature>
<feature type="binding site" evidence="1">
    <location>
        <position position="89"/>
    </location>
    <ligand>
        <name>carboxy-S-adenosyl-L-methionine</name>
        <dbReference type="ChEBI" id="CHEBI:134278"/>
    </ligand>
</feature>
<feature type="binding site" evidence="1">
    <location>
        <position position="108"/>
    </location>
    <ligand>
        <name>carboxy-S-adenosyl-L-methionine</name>
        <dbReference type="ChEBI" id="CHEBI:134278"/>
    </ligand>
</feature>
<feature type="binding site" evidence="1">
    <location>
        <begin position="130"/>
        <end position="132"/>
    </location>
    <ligand>
        <name>carboxy-S-adenosyl-L-methionine</name>
        <dbReference type="ChEBI" id="CHEBI:134278"/>
    </ligand>
</feature>
<feature type="binding site" evidence="1">
    <location>
        <begin position="157"/>
        <end position="158"/>
    </location>
    <ligand>
        <name>carboxy-S-adenosyl-L-methionine</name>
        <dbReference type="ChEBI" id="CHEBI:134278"/>
    </ligand>
</feature>
<feature type="binding site" evidence="1">
    <location>
        <position position="177"/>
    </location>
    <ligand>
        <name>carboxy-S-adenosyl-L-methionine</name>
        <dbReference type="ChEBI" id="CHEBI:134278"/>
    </ligand>
</feature>
<feature type="binding site" evidence="1">
    <location>
        <position position="292"/>
    </location>
    <ligand>
        <name>carboxy-S-adenosyl-L-methionine</name>
        <dbReference type="ChEBI" id="CHEBI:134278"/>
    </ligand>
</feature>
<reference key="1">
    <citation type="journal article" date="2007" name="Proc. Natl. Acad. Sci. U.S.A.">
        <title>Deep-sea vent epsilon-proteobacterial genomes provide insights into emergence of pathogens.</title>
        <authorList>
            <person name="Nakagawa S."/>
            <person name="Takaki Y."/>
            <person name="Shimamura S."/>
            <person name="Reysenbach A.-L."/>
            <person name="Takai K."/>
            <person name="Horikoshi K."/>
        </authorList>
    </citation>
    <scope>NUCLEOTIDE SEQUENCE [LARGE SCALE GENOMIC DNA]</scope>
    <source>
        <strain>NBC37-1</strain>
    </source>
</reference>
<organism>
    <name type="scientific">Sulfurovum sp. (strain NBC37-1)</name>
    <dbReference type="NCBI Taxonomy" id="387093"/>
    <lineage>
        <taxon>Bacteria</taxon>
        <taxon>Pseudomonadati</taxon>
        <taxon>Campylobacterota</taxon>
        <taxon>Epsilonproteobacteria</taxon>
        <taxon>Campylobacterales</taxon>
        <taxon>Sulfurovaceae</taxon>
        <taxon>Sulfurovum</taxon>
    </lineage>
</organism>
<gene>
    <name evidence="1" type="primary">cmoB</name>
    <name type="ordered locus">SUN_0603</name>
</gene>
<protein>
    <recommendedName>
        <fullName evidence="1">tRNA U34 carboxymethyltransferase</fullName>
        <ecNumber evidence="1">2.5.1.-</ecNumber>
    </recommendedName>
</protein>
<keyword id="KW-0808">Transferase</keyword>
<keyword id="KW-0819">tRNA processing</keyword>
<sequence>MNLETLRQERRKWLTWKNIVPYQEAIKALPEYDDVEVSLGDVVDIQIADLSHKDAEQIRETALLMKPWRKGPFRINDLFIDSEWQSQIKYNLLEPHFDLKGKVVGDIGCNNGYYLFRMLSQKPEKLIGFDPSAIYYSQFRFLEHFIKSDIVYELLGVEHVEFYEHKFDTLFCLGVLYHRSDPVAMLKSLFKGLNKGGELILDTFMIDGEGEMCLTPRDRYSKIPNIYFVPTVNALKNWCLRAGFESVEVLEIMKTDLNEQRKTEWIDTQSLEDFLDPDDPEKTVEGYPAPKRVYIKAIKKA</sequence>
<evidence type="ECO:0000255" key="1">
    <source>
        <dbReference type="HAMAP-Rule" id="MF_01590"/>
    </source>
</evidence>
<dbReference type="EC" id="2.5.1.-" evidence="1"/>
<dbReference type="EMBL" id="AP009179">
    <property type="protein sequence ID" value="BAF71562.1"/>
    <property type="molecule type" value="Genomic_DNA"/>
</dbReference>
<dbReference type="RefSeq" id="WP_011980295.1">
    <property type="nucleotide sequence ID" value="NC_009663.1"/>
</dbReference>
<dbReference type="SMR" id="A6Q7V3"/>
<dbReference type="STRING" id="387093.SUN_0603"/>
<dbReference type="KEGG" id="sun:SUN_0603"/>
<dbReference type="eggNOG" id="COG0500">
    <property type="taxonomic scope" value="Bacteria"/>
</dbReference>
<dbReference type="HOGENOM" id="CLU_052665_1_0_7"/>
<dbReference type="OrthoDB" id="9765084at2"/>
<dbReference type="Proteomes" id="UP000006378">
    <property type="component" value="Chromosome"/>
</dbReference>
<dbReference type="GO" id="GO:0016765">
    <property type="term" value="F:transferase activity, transferring alkyl or aryl (other than methyl) groups"/>
    <property type="evidence" value="ECO:0007669"/>
    <property type="project" value="InterPro"/>
</dbReference>
<dbReference type="GO" id="GO:0002098">
    <property type="term" value="P:tRNA wobble uridine modification"/>
    <property type="evidence" value="ECO:0007669"/>
    <property type="project" value="InterPro"/>
</dbReference>
<dbReference type="CDD" id="cd02440">
    <property type="entry name" value="AdoMet_MTases"/>
    <property type="match status" value="1"/>
</dbReference>
<dbReference type="Gene3D" id="3.40.50.150">
    <property type="entry name" value="Vaccinia Virus protein VP39"/>
    <property type="match status" value="1"/>
</dbReference>
<dbReference type="HAMAP" id="MF_01590">
    <property type="entry name" value="tRNA_carboxymethyltr_CmoB"/>
    <property type="match status" value="1"/>
</dbReference>
<dbReference type="InterPro" id="IPR010017">
    <property type="entry name" value="CmoB"/>
</dbReference>
<dbReference type="InterPro" id="IPR027555">
    <property type="entry name" value="Mo5U34_MeTrfas-like"/>
</dbReference>
<dbReference type="InterPro" id="IPR029063">
    <property type="entry name" value="SAM-dependent_MTases_sf"/>
</dbReference>
<dbReference type="NCBIfam" id="NF011650">
    <property type="entry name" value="PRK15068.1"/>
    <property type="match status" value="1"/>
</dbReference>
<dbReference type="NCBIfam" id="TIGR00452">
    <property type="entry name" value="tRNA 5-methoxyuridine(34)/uridine 5-oxyacetic acid(34) synthase CmoB"/>
    <property type="match status" value="1"/>
</dbReference>
<dbReference type="Pfam" id="PF08003">
    <property type="entry name" value="Methyltransf_9"/>
    <property type="match status" value="1"/>
</dbReference>
<dbReference type="SUPFAM" id="SSF53335">
    <property type="entry name" value="S-adenosyl-L-methionine-dependent methyltransferases"/>
    <property type="match status" value="1"/>
</dbReference>
<proteinExistence type="inferred from homology"/>
<name>CMOB_SULNB</name>
<accession>A6Q7V3</accession>